<gene>
    <name type="ordered locus">Daro_3238</name>
</gene>
<reference key="1">
    <citation type="journal article" date="2009" name="BMC Genomics">
        <title>Metabolic analysis of the soil microbe Dechloromonas aromatica str. RCB: indications of a surprisingly complex life-style and cryptic anaerobic pathways for aromatic degradation.</title>
        <authorList>
            <person name="Salinero K.K."/>
            <person name="Keller K."/>
            <person name="Feil W.S."/>
            <person name="Feil H."/>
            <person name="Trong S."/>
            <person name="Di Bartolo G."/>
            <person name="Lapidus A."/>
        </authorList>
    </citation>
    <scope>NUCLEOTIDE SEQUENCE [LARGE SCALE GENOMIC DNA]</scope>
    <source>
        <strain>RCB</strain>
    </source>
</reference>
<sequence>MNPNKKIYISDVTLRDGSHAIRHQYSVENAVQIARALDKAKVDSIEVAHGDGLQGSSFNYGFGAHTDLEWIEAVADTVKHAKVATLLLPGIGTVHDLKAAYSAGARIVRVATHCTEADVSRQHIEVARNLGMEAVGFLMMSHMTTPQALAEQAKLMESYGATCCYVVDSGGALSMNDVRDRFRAFKEVLKPETETGIHAHHNLSLGVANSIVAVEEGCDRVDASLSGMGAGAGNAPLEVFIAAADRMGWNHGCNLYTLMDAADDIVRPLQDRPVRVDRETLALGYAGVYSSFLRHSEVAAKKYGLKAVDILVELGRRRMVGGQEDMIVDVALDLLKGHEHDAEHAIPTMSEAG</sequence>
<dbReference type="EC" id="4.1.3.39" evidence="1"/>
<dbReference type="EMBL" id="CP000089">
    <property type="protein sequence ID" value="AAZ47968.1"/>
    <property type="molecule type" value="Genomic_DNA"/>
</dbReference>
<dbReference type="SMR" id="Q47B13"/>
<dbReference type="STRING" id="159087.Daro_3238"/>
<dbReference type="KEGG" id="dar:Daro_3238"/>
<dbReference type="eggNOG" id="COG0119">
    <property type="taxonomic scope" value="Bacteria"/>
</dbReference>
<dbReference type="HOGENOM" id="CLU_049173_0_0_4"/>
<dbReference type="OrthoDB" id="9803573at2"/>
<dbReference type="GO" id="GO:0003852">
    <property type="term" value="F:2-isopropylmalate synthase activity"/>
    <property type="evidence" value="ECO:0007669"/>
    <property type="project" value="TreeGrafter"/>
</dbReference>
<dbReference type="GO" id="GO:0008701">
    <property type="term" value="F:4-hydroxy-2-oxovalerate aldolase activity"/>
    <property type="evidence" value="ECO:0007669"/>
    <property type="project" value="UniProtKB-UniRule"/>
</dbReference>
<dbReference type="GO" id="GO:0030145">
    <property type="term" value="F:manganese ion binding"/>
    <property type="evidence" value="ECO:0007669"/>
    <property type="project" value="UniProtKB-UniRule"/>
</dbReference>
<dbReference type="GO" id="GO:0009056">
    <property type="term" value="P:catabolic process"/>
    <property type="evidence" value="ECO:0007669"/>
    <property type="project" value="UniProtKB-KW"/>
</dbReference>
<dbReference type="GO" id="GO:0009098">
    <property type="term" value="P:L-leucine biosynthetic process"/>
    <property type="evidence" value="ECO:0007669"/>
    <property type="project" value="TreeGrafter"/>
</dbReference>
<dbReference type="CDD" id="cd07943">
    <property type="entry name" value="DRE_TIM_HOA"/>
    <property type="match status" value="1"/>
</dbReference>
<dbReference type="FunFam" id="1.10.8.60:FF:000042">
    <property type="entry name" value="4-hydroxy-2-oxovalerate aldolase"/>
    <property type="match status" value="1"/>
</dbReference>
<dbReference type="Gene3D" id="1.10.8.60">
    <property type="match status" value="1"/>
</dbReference>
<dbReference type="Gene3D" id="3.20.20.70">
    <property type="entry name" value="Aldolase class I"/>
    <property type="match status" value="1"/>
</dbReference>
<dbReference type="HAMAP" id="MF_01656">
    <property type="entry name" value="HOA"/>
    <property type="match status" value="1"/>
</dbReference>
<dbReference type="InterPro" id="IPR050073">
    <property type="entry name" value="2-IPM_HCS-like"/>
</dbReference>
<dbReference type="InterPro" id="IPR017629">
    <property type="entry name" value="4OH_2_O-val_aldolase"/>
</dbReference>
<dbReference type="InterPro" id="IPR013785">
    <property type="entry name" value="Aldolase_TIM"/>
</dbReference>
<dbReference type="InterPro" id="IPR012425">
    <property type="entry name" value="DmpG_comm"/>
</dbReference>
<dbReference type="InterPro" id="IPR035685">
    <property type="entry name" value="DRE_TIM_HOA"/>
</dbReference>
<dbReference type="InterPro" id="IPR000891">
    <property type="entry name" value="PYR_CT"/>
</dbReference>
<dbReference type="NCBIfam" id="TIGR03217">
    <property type="entry name" value="4OH_2_O_val_ald"/>
    <property type="match status" value="1"/>
</dbReference>
<dbReference type="NCBIfam" id="NF006049">
    <property type="entry name" value="PRK08195.1"/>
    <property type="match status" value="1"/>
</dbReference>
<dbReference type="PANTHER" id="PTHR10277:SF9">
    <property type="entry name" value="2-ISOPROPYLMALATE SYNTHASE 1, CHLOROPLASTIC-RELATED"/>
    <property type="match status" value="1"/>
</dbReference>
<dbReference type="PANTHER" id="PTHR10277">
    <property type="entry name" value="HOMOCITRATE SYNTHASE-RELATED"/>
    <property type="match status" value="1"/>
</dbReference>
<dbReference type="Pfam" id="PF07836">
    <property type="entry name" value="DmpG_comm"/>
    <property type="match status" value="1"/>
</dbReference>
<dbReference type="Pfam" id="PF00682">
    <property type="entry name" value="HMGL-like"/>
    <property type="match status" value="1"/>
</dbReference>
<dbReference type="SUPFAM" id="SSF51569">
    <property type="entry name" value="Aldolase"/>
    <property type="match status" value="1"/>
</dbReference>
<dbReference type="SUPFAM" id="SSF89000">
    <property type="entry name" value="post-HMGL domain-like"/>
    <property type="match status" value="1"/>
</dbReference>
<dbReference type="PROSITE" id="PS50991">
    <property type="entry name" value="PYR_CT"/>
    <property type="match status" value="1"/>
</dbReference>
<feature type="chain" id="PRO_0000387820" description="4-hydroxy-2-oxovalerate aldolase 3">
    <location>
        <begin position="1"/>
        <end position="353"/>
    </location>
</feature>
<feature type="domain" description="Pyruvate carboxyltransferase" evidence="1">
    <location>
        <begin position="7"/>
        <end position="259"/>
    </location>
</feature>
<feature type="active site" description="Proton acceptor" evidence="1">
    <location>
        <position position="19"/>
    </location>
</feature>
<feature type="binding site" evidence="1">
    <location>
        <begin position="15"/>
        <end position="16"/>
    </location>
    <ligand>
        <name>substrate</name>
    </ligand>
</feature>
<feature type="binding site" evidence="1">
    <location>
        <position position="16"/>
    </location>
    <ligand>
        <name>Mn(2+)</name>
        <dbReference type="ChEBI" id="CHEBI:29035"/>
    </ligand>
</feature>
<feature type="binding site" evidence="1">
    <location>
        <position position="169"/>
    </location>
    <ligand>
        <name>substrate</name>
    </ligand>
</feature>
<feature type="binding site" evidence="1">
    <location>
        <position position="198"/>
    </location>
    <ligand>
        <name>Mn(2+)</name>
        <dbReference type="ChEBI" id="CHEBI:29035"/>
    </ligand>
</feature>
<feature type="binding site" evidence="1">
    <location>
        <position position="198"/>
    </location>
    <ligand>
        <name>substrate</name>
    </ligand>
</feature>
<feature type="binding site" evidence="1">
    <location>
        <position position="200"/>
    </location>
    <ligand>
        <name>Mn(2+)</name>
        <dbReference type="ChEBI" id="CHEBI:29035"/>
    </ligand>
</feature>
<feature type="binding site" evidence="1">
    <location>
        <position position="289"/>
    </location>
    <ligand>
        <name>substrate</name>
    </ligand>
</feature>
<feature type="site" description="Transition state stabilizer" evidence="1">
    <location>
        <position position="15"/>
    </location>
</feature>
<evidence type="ECO:0000255" key="1">
    <source>
        <dbReference type="HAMAP-Rule" id="MF_01656"/>
    </source>
</evidence>
<accession>Q47B13</accession>
<keyword id="KW-0058">Aromatic hydrocarbons catabolism</keyword>
<keyword id="KW-0456">Lyase</keyword>
<keyword id="KW-0464">Manganese</keyword>
<keyword id="KW-0479">Metal-binding</keyword>
<name>HOA3_DECAR</name>
<comment type="catalytic activity">
    <reaction evidence="1">
        <text>(S)-4-hydroxy-2-oxopentanoate = acetaldehyde + pyruvate</text>
        <dbReference type="Rhea" id="RHEA:22624"/>
        <dbReference type="ChEBI" id="CHEBI:15343"/>
        <dbReference type="ChEBI" id="CHEBI:15361"/>
        <dbReference type="ChEBI" id="CHEBI:73143"/>
        <dbReference type="EC" id="4.1.3.39"/>
    </reaction>
</comment>
<comment type="similarity">
    <text evidence="1">Belongs to the 4-hydroxy-2-oxovalerate aldolase family.</text>
</comment>
<protein>
    <recommendedName>
        <fullName evidence="1">4-hydroxy-2-oxovalerate aldolase 3</fullName>
        <shortName evidence="1">HOA 3</shortName>
        <ecNumber evidence="1">4.1.3.39</ecNumber>
    </recommendedName>
    <alternativeName>
        <fullName evidence="1">4-hydroxy-2-keto-pentanoic acid aldolase 3</fullName>
    </alternativeName>
    <alternativeName>
        <fullName evidence="1">4-hydroxy-2-oxopentanoate aldolase 3</fullName>
    </alternativeName>
</protein>
<organism>
    <name type="scientific">Dechloromonas aromatica (strain RCB)</name>
    <dbReference type="NCBI Taxonomy" id="159087"/>
    <lineage>
        <taxon>Bacteria</taxon>
        <taxon>Pseudomonadati</taxon>
        <taxon>Pseudomonadota</taxon>
        <taxon>Betaproteobacteria</taxon>
        <taxon>Rhodocyclales</taxon>
        <taxon>Azonexaceae</taxon>
        <taxon>Dechloromonas</taxon>
    </lineage>
</organism>
<proteinExistence type="inferred from homology"/>